<keyword id="KW-0002">3D-structure</keyword>
<keyword id="KW-0992">Brugada syndrome</keyword>
<keyword id="KW-1003">Cell membrane</keyword>
<keyword id="KW-0966">Cell projection</keyword>
<keyword id="KW-0963">Cytoplasm</keyword>
<keyword id="KW-0225">Disease variant</keyword>
<keyword id="KW-0325">Glycoprotein</keyword>
<keyword id="KW-0406">Ion transport</keyword>
<keyword id="KW-0472">Membrane</keyword>
<keyword id="KW-0630">Potassium</keyword>
<keyword id="KW-0633">Potassium transport</keyword>
<keyword id="KW-1267">Proteomics identification</keyword>
<keyword id="KW-1185">Reference proteome</keyword>
<keyword id="KW-0812">Transmembrane</keyword>
<keyword id="KW-1133">Transmembrane helix</keyword>
<keyword id="KW-0813">Transport</keyword>
<feature type="chain" id="PRO_0000144289" description="Potassium voltage-gated channel subfamily E member 3">
    <location>
        <begin position="1"/>
        <end position="103"/>
    </location>
</feature>
<feature type="transmembrane region" description="Helical" evidence="14 20">
    <location>
        <begin position="57"/>
        <end position="77"/>
    </location>
</feature>
<feature type="topological domain" description="Cytoplasmic" evidence="17">
    <location>
        <begin position="78"/>
        <end position="103"/>
    </location>
</feature>
<feature type="region of interest" description="Disordered" evidence="3">
    <location>
        <begin position="32"/>
        <end position="53"/>
    </location>
</feature>
<feature type="region of interest" description="Interaction with KCNQ1" evidence="14">
    <location>
        <begin position="68"/>
        <end position="79"/>
    </location>
</feature>
<feature type="compositionally biased region" description="Basic and acidic residues" evidence="3">
    <location>
        <begin position="43"/>
        <end position="53"/>
    </location>
</feature>
<feature type="glycosylation site" description="N-linked (GlcNAc...) asparagine" evidence="2">
    <location>
        <position position="5"/>
    </location>
</feature>
<feature type="glycosylation site" description="N-linked (GlcNAc...) asparagine" evidence="2">
    <location>
        <position position="22"/>
    </location>
</feature>
<feature type="glycosylation site" description="N-linked (GlcNAc...) asparagine" evidence="2">
    <location>
        <position position="41"/>
    </location>
</feature>
<feature type="sequence variant" id="VAR_058635" description="In dbSNP:rs200856070." evidence="12">
    <original>T</original>
    <variation>A</variation>
    <location>
        <position position="4"/>
    </location>
</feature>
<feature type="sequence variant" id="VAR_058636" description="In dbSNP:rs34604640." evidence="12">
    <original>P</original>
    <variation>R</variation>
    <location>
        <position position="39"/>
    </location>
</feature>
<feature type="sequence variant" id="VAR_015064" description="Found in some patients with periodic paralysis; uncertain significance; alters voltage dependence, lowers current and diminishes open probability in KCNC4/KCNE3 channel; lowers current in KCNQ1/KCNE3 channel; dbSNP:rs17215437." evidence="5 7 9 10">
    <original>R</original>
    <variation>H</variation>
    <location>
        <position position="83"/>
    </location>
</feature>
<feature type="sequence variant" id="VAR_058637" description="In BRGDA6; uncertain significance; also in a patient suffering from drug-induced torsades de pointes; uncertain significance; dbSNP:rs121908441." evidence="11 12">
    <original>R</original>
    <variation>H</variation>
    <location>
        <position position="99"/>
    </location>
</feature>
<feature type="mutagenesis site" description="Decreases current 4-fold in KCNH2/KCNE3 channel." evidence="6">
    <original>D</original>
    <variation>N</variation>
    <location>
        <position position="90"/>
    </location>
</feature>
<feature type="helix" evidence="21">
    <location>
        <begin position="8"/>
        <end position="29"/>
    </location>
</feature>
<feature type="helix" evidence="22">
    <location>
        <begin position="57"/>
        <end position="80"/>
    </location>
</feature>
<feature type="helix" evidence="22">
    <location>
        <begin position="91"/>
        <end position="98"/>
    </location>
</feature>
<sequence length="103" mass="11710">METTNGTETWYESLHAVLKALNATLHSNLLCRPGPGLGPDNQTEERRASLPGRDDNSYMYILFVMFLFAVTVGSLILGYTRSRKVDKRSDPYHVYIKNRVSMI</sequence>
<name>KCNE3_HUMAN</name>
<accession>Q9Y6H6</accession>
<proteinExistence type="evidence at protein level"/>
<dbReference type="EMBL" id="AF076531">
    <property type="protein sequence ID" value="AAD28089.1"/>
    <property type="molecule type" value="mRNA"/>
</dbReference>
<dbReference type="EMBL" id="AF302494">
    <property type="protein sequence ID" value="AAG16255.1"/>
    <property type="molecule type" value="mRNA"/>
</dbReference>
<dbReference type="EMBL" id="BC032235">
    <property type="status" value="NOT_ANNOTATED_CDS"/>
    <property type="molecule type" value="mRNA"/>
</dbReference>
<dbReference type="CCDS" id="CCDS8232.1"/>
<dbReference type="RefSeq" id="NP_005463.1">
    <property type="nucleotide sequence ID" value="NM_005472.5"/>
</dbReference>
<dbReference type="RefSeq" id="XP_016872536.1">
    <property type="nucleotide sequence ID" value="XM_017017047.2"/>
</dbReference>
<dbReference type="RefSeq" id="XP_016872537.1">
    <property type="nucleotide sequence ID" value="XM_017017048.2"/>
</dbReference>
<dbReference type="RefSeq" id="XP_016872538.1">
    <property type="nucleotide sequence ID" value="XM_017017049.2"/>
</dbReference>
<dbReference type="RefSeq" id="XP_016872539.1">
    <property type="nucleotide sequence ID" value="XM_017017050.1"/>
</dbReference>
<dbReference type="RefSeq" id="XP_016872540.1">
    <property type="nucleotide sequence ID" value="XM_017017051.3"/>
</dbReference>
<dbReference type="RefSeq" id="XP_016872541.1">
    <property type="nucleotide sequence ID" value="XM_017017052.1"/>
</dbReference>
<dbReference type="RefSeq" id="XP_047282132.1">
    <property type="nucleotide sequence ID" value="XM_047426176.1"/>
</dbReference>
<dbReference type="RefSeq" id="XP_047282133.1">
    <property type="nucleotide sequence ID" value="XM_047426177.1"/>
</dbReference>
<dbReference type="RefSeq" id="XP_054223334.1">
    <property type="nucleotide sequence ID" value="XM_054367359.1"/>
</dbReference>
<dbReference type="RefSeq" id="XP_054223335.1">
    <property type="nucleotide sequence ID" value="XM_054367360.1"/>
</dbReference>
<dbReference type="RefSeq" id="XP_054223336.1">
    <property type="nucleotide sequence ID" value="XM_054367361.1"/>
</dbReference>
<dbReference type="RefSeq" id="XP_054223337.1">
    <property type="nucleotide sequence ID" value="XM_054367362.1"/>
</dbReference>
<dbReference type="RefSeq" id="XP_054223338.1">
    <property type="nucleotide sequence ID" value="XM_054367363.1"/>
</dbReference>
<dbReference type="PDB" id="2NDJ">
    <property type="method" value="NMR"/>
    <property type="chains" value="A=1-103"/>
</dbReference>
<dbReference type="PDB" id="6V00">
    <property type="method" value="EM"/>
    <property type="resolution" value="3.10 A"/>
    <property type="chains" value="C/F/I/L=1-103"/>
</dbReference>
<dbReference type="PDB" id="6V01">
    <property type="method" value="EM"/>
    <property type="resolution" value="3.90 A"/>
    <property type="chains" value="C/F/I/L=1-103"/>
</dbReference>
<dbReference type="PDBsum" id="2NDJ"/>
<dbReference type="PDBsum" id="6V00"/>
<dbReference type="PDBsum" id="6V01"/>
<dbReference type="BMRB" id="Q9Y6H6"/>
<dbReference type="EMDB" id="EMD-20966"/>
<dbReference type="EMDB" id="EMD-20967"/>
<dbReference type="SMR" id="Q9Y6H6"/>
<dbReference type="BioGRID" id="115326">
    <property type="interactions" value="305"/>
</dbReference>
<dbReference type="CORUM" id="Q9Y6H6"/>
<dbReference type="FunCoup" id="Q9Y6H6">
    <property type="interactions" value="125"/>
</dbReference>
<dbReference type="IntAct" id="Q9Y6H6">
    <property type="interactions" value="293"/>
</dbReference>
<dbReference type="MINT" id="Q9Y6H6"/>
<dbReference type="STRING" id="9606.ENSP00000310557"/>
<dbReference type="DrugBank" id="DB00228">
    <property type="generic name" value="Enflurane"/>
</dbReference>
<dbReference type="DrugBank" id="DB01110">
    <property type="generic name" value="Miconazole"/>
</dbReference>
<dbReference type="DrugBank" id="DB01069">
    <property type="generic name" value="Promethazine"/>
</dbReference>
<dbReference type="TCDB" id="8.A.10.3.3">
    <property type="family name" value="the slow voltage-gated k+ channel accessory protein (mink) family"/>
</dbReference>
<dbReference type="GlyCosmos" id="Q9Y6H6">
    <property type="glycosylation" value="3 sites, No reported glycans"/>
</dbReference>
<dbReference type="GlyGen" id="Q9Y6H6">
    <property type="glycosylation" value="4 sites"/>
</dbReference>
<dbReference type="iPTMnet" id="Q9Y6H6"/>
<dbReference type="PhosphoSitePlus" id="Q9Y6H6"/>
<dbReference type="BioMuta" id="KCNE3"/>
<dbReference type="jPOST" id="Q9Y6H6"/>
<dbReference type="MassIVE" id="Q9Y6H6"/>
<dbReference type="PaxDb" id="9606-ENSP00000310557"/>
<dbReference type="PeptideAtlas" id="Q9Y6H6"/>
<dbReference type="Antibodypedia" id="2753">
    <property type="antibodies" value="153 antibodies from 28 providers"/>
</dbReference>
<dbReference type="DNASU" id="10008"/>
<dbReference type="Ensembl" id="ENST00000310128.9">
    <property type="protein sequence ID" value="ENSP00000310557.4"/>
    <property type="gene ID" value="ENSG00000175538.11"/>
</dbReference>
<dbReference type="Ensembl" id="ENST00000525550.1">
    <property type="protein sequence ID" value="ENSP00000433633.1"/>
    <property type="gene ID" value="ENSG00000175538.11"/>
</dbReference>
<dbReference type="GeneID" id="10008"/>
<dbReference type="KEGG" id="hsa:10008"/>
<dbReference type="MANE-Select" id="ENST00000310128.9">
    <property type="protein sequence ID" value="ENSP00000310557.4"/>
    <property type="RefSeq nucleotide sequence ID" value="NM_005472.5"/>
    <property type="RefSeq protein sequence ID" value="NP_005463.1"/>
</dbReference>
<dbReference type="UCSC" id="uc001ovc.4">
    <property type="organism name" value="human"/>
</dbReference>
<dbReference type="AGR" id="HGNC:6243"/>
<dbReference type="CTD" id="10008"/>
<dbReference type="DisGeNET" id="10008"/>
<dbReference type="GeneCards" id="KCNE3"/>
<dbReference type="GeneReviews" id="KCNE3"/>
<dbReference type="HGNC" id="HGNC:6243">
    <property type="gene designation" value="KCNE3"/>
</dbReference>
<dbReference type="HPA" id="ENSG00000175538">
    <property type="expression patterns" value="Tissue enhanced (intestine, stomach)"/>
</dbReference>
<dbReference type="MalaCards" id="KCNE3"/>
<dbReference type="MIM" id="604433">
    <property type="type" value="gene"/>
</dbReference>
<dbReference type="MIM" id="613119">
    <property type="type" value="phenotype"/>
</dbReference>
<dbReference type="neXtProt" id="NX_Q9Y6H6"/>
<dbReference type="OpenTargets" id="ENSG00000175538"/>
<dbReference type="Orphanet" id="130">
    <property type="disease" value="Brugada syndrome"/>
</dbReference>
<dbReference type="Orphanet" id="681">
    <property type="disease" value="Hypokalemic periodic paralysis"/>
</dbReference>
<dbReference type="PharmGKB" id="PA393"/>
<dbReference type="VEuPathDB" id="HostDB:ENSG00000175538"/>
<dbReference type="eggNOG" id="ENOG502S4UF">
    <property type="taxonomic scope" value="Eukaryota"/>
</dbReference>
<dbReference type="GeneTree" id="ENSGT00940000155001"/>
<dbReference type="HOGENOM" id="CLU_180169_0_0_1"/>
<dbReference type="InParanoid" id="Q9Y6H6"/>
<dbReference type="OMA" id="ANAYMYI"/>
<dbReference type="OrthoDB" id="9907547at2759"/>
<dbReference type="PAN-GO" id="Q9Y6H6">
    <property type="GO annotations" value="10 GO annotations based on evolutionary models"/>
</dbReference>
<dbReference type="PhylomeDB" id="Q9Y6H6"/>
<dbReference type="TreeFam" id="TF335981"/>
<dbReference type="PathwayCommons" id="Q9Y6H6"/>
<dbReference type="Reactome" id="R-HSA-5576890">
    <property type="pathway name" value="Phase 3 - rapid repolarisation"/>
</dbReference>
<dbReference type="Reactome" id="R-HSA-5576893">
    <property type="pathway name" value="Phase 2 - plateau phase"/>
</dbReference>
<dbReference type="SignaLink" id="Q9Y6H6"/>
<dbReference type="SIGNOR" id="Q9Y6H6"/>
<dbReference type="BioGRID-ORCS" id="10008">
    <property type="hits" value="14 hits in 1157 CRISPR screens"/>
</dbReference>
<dbReference type="ChiTaRS" id="KCNE3">
    <property type="organism name" value="human"/>
</dbReference>
<dbReference type="GeneWiki" id="KCNE3"/>
<dbReference type="GenomeRNAi" id="10008"/>
<dbReference type="Pharos" id="Q9Y6H6">
    <property type="development level" value="Tbio"/>
</dbReference>
<dbReference type="PRO" id="PR:Q9Y6H6"/>
<dbReference type="Proteomes" id="UP000005640">
    <property type="component" value="Chromosome 11"/>
</dbReference>
<dbReference type="RNAct" id="Q9Y6H6">
    <property type="molecule type" value="protein"/>
</dbReference>
<dbReference type="Bgee" id="ENSG00000175538">
    <property type="expression patterns" value="Expressed in nasal cavity epithelium and 159 other cell types or tissues"/>
</dbReference>
<dbReference type="ExpressionAtlas" id="Q9Y6H6">
    <property type="expression patterns" value="baseline and differential"/>
</dbReference>
<dbReference type="GO" id="GO:1990794">
    <property type="term" value="C:basolateral part of cell"/>
    <property type="evidence" value="ECO:0007669"/>
    <property type="project" value="Ensembl"/>
</dbReference>
<dbReference type="GO" id="GO:0005737">
    <property type="term" value="C:cytoplasm"/>
    <property type="evidence" value="ECO:0000314"/>
    <property type="project" value="UniProtKB"/>
</dbReference>
<dbReference type="GO" id="GO:0030425">
    <property type="term" value="C:dendrite"/>
    <property type="evidence" value="ECO:0000314"/>
    <property type="project" value="UniProtKB"/>
</dbReference>
<dbReference type="GO" id="GO:0045121">
    <property type="term" value="C:membrane raft"/>
    <property type="evidence" value="ECO:0000314"/>
    <property type="project" value="UniProtKB"/>
</dbReference>
<dbReference type="GO" id="GO:0032809">
    <property type="term" value="C:neuronal cell body membrane"/>
    <property type="evidence" value="ECO:0000314"/>
    <property type="project" value="UniProtKB"/>
</dbReference>
<dbReference type="GO" id="GO:0043204">
    <property type="term" value="C:perikaryon"/>
    <property type="evidence" value="ECO:0000314"/>
    <property type="project" value="UniProtKB"/>
</dbReference>
<dbReference type="GO" id="GO:0005886">
    <property type="term" value="C:plasma membrane"/>
    <property type="evidence" value="ECO:0000314"/>
    <property type="project" value="HPA"/>
</dbReference>
<dbReference type="GO" id="GO:0031982">
    <property type="term" value="C:vesicle"/>
    <property type="evidence" value="ECO:0000314"/>
    <property type="project" value="UniProtKB"/>
</dbReference>
<dbReference type="GO" id="GO:0008076">
    <property type="term" value="C:voltage-gated potassium channel complex"/>
    <property type="evidence" value="ECO:0000318"/>
    <property type="project" value="GO_Central"/>
</dbReference>
<dbReference type="GO" id="GO:0015459">
    <property type="term" value="F:potassium channel regulator activity"/>
    <property type="evidence" value="ECO:0000314"/>
    <property type="project" value="UniProtKB"/>
</dbReference>
<dbReference type="GO" id="GO:0044325">
    <property type="term" value="F:transmembrane transporter binding"/>
    <property type="evidence" value="ECO:0000318"/>
    <property type="project" value="GO_Central"/>
</dbReference>
<dbReference type="GO" id="GO:0005249">
    <property type="term" value="F:voltage-gated potassium channel activity"/>
    <property type="evidence" value="ECO:0007669"/>
    <property type="project" value="InterPro"/>
</dbReference>
<dbReference type="GO" id="GO:0030644">
    <property type="term" value="P:intracellular chloride ion homeostasis"/>
    <property type="evidence" value="ECO:0007669"/>
    <property type="project" value="Ensembl"/>
</dbReference>
<dbReference type="GO" id="GO:0086011">
    <property type="term" value="P:membrane repolarization during action potential"/>
    <property type="evidence" value="ECO:0000318"/>
    <property type="project" value="GO_Central"/>
</dbReference>
<dbReference type="GO" id="GO:0098915">
    <property type="term" value="P:membrane repolarization during ventricular cardiac muscle cell action potential"/>
    <property type="evidence" value="ECO:0007669"/>
    <property type="project" value="GOC"/>
</dbReference>
<dbReference type="GO" id="GO:1902260">
    <property type="term" value="P:negative regulation of delayed rectifier potassium channel activity"/>
    <property type="evidence" value="ECO:0000314"/>
    <property type="project" value="UniProtKB"/>
</dbReference>
<dbReference type="GO" id="GO:1905025">
    <property type="term" value="P:negative regulation of membrane repolarization during ventricular cardiac muscle cell action potential"/>
    <property type="evidence" value="ECO:0000315"/>
    <property type="project" value="BHF-UCL"/>
</dbReference>
<dbReference type="GO" id="GO:1903765">
    <property type="term" value="P:negative regulation of potassium ion export across plasma membrane"/>
    <property type="evidence" value="ECO:0000314"/>
    <property type="project" value="BHF-UCL"/>
</dbReference>
<dbReference type="GO" id="GO:0097623">
    <property type="term" value="P:potassium ion export across plasma membrane"/>
    <property type="evidence" value="ECO:0000318"/>
    <property type="project" value="GO_Central"/>
</dbReference>
<dbReference type="GO" id="GO:0086091">
    <property type="term" value="P:regulation of heart rate by cardiac conduction"/>
    <property type="evidence" value="ECO:0000315"/>
    <property type="project" value="BHF-UCL"/>
</dbReference>
<dbReference type="GO" id="GO:0060307">
    <property type="term" value="P:regulation of ventricular cardiac muscle cell membrane repolarization"/>
    <property type="evidence" value="ECO:0000318"/>
    <property type="project" value="GO_Central"/>
</dbReference>
<dbReference type="GO" id="GO:0006814">
    <property type="term" value="P:sodium ion transport"/>
    <property type="evidence" value="ECO:0007669"/>
    <property type="project" value="Ensembl"/>
</dbReference>
<dbReference type="GO" id="GO:0086005">
    <property type="term" value="P:ventricular cardiac muscle cell action potential"/>
    <property type="evidence" value="ECO:0000318"/>
    <property type="project" value="GO_Central"/>
</dbReference>
<dbReference type="DisProt" id="DP01608"/>
<dbReference type="InterPro" id="IPR000369">
    <property type="entry name" value="K_chnl_KCNE"/>
</dbReference>
<dbReference type="InterPro" id="IPR005426">
    <property type="entry name" value="K_chnl_volt-dep_bsu_KCNE3"/>
</dbReference>
<dbReference type="PANTHER" id="PTHR15282">
    <property type="entry name" value="POTASSIUM VOLTAGE-GATED CHANNEL SUBFAMILY E MEMBER 1, 3"/>
    <property type="match status" value="1"/>
</dbReference>
<dbReference type="PANTHER" id="PTHR15282:SF6">
    <property type="entry name" value="POTASSIUM VOLTAGE-GATED CHANNEL SUBFAMILY E MEMBER 3"/>
    <property type="match status" value="1"/>
</dbReference>
<dbReference type="Pfam" id="PF02060">
    <property type="entry name" value="ISK_Channel"/>
    <property type="match status" value="1"/>
</dbReference>
<dbReference type="PRINTS" id="PR01606">
    <property type="entry name" value="KCNE3CHANNEL"/>
</dbReference>
<dbReference type="PRINTS" id="PR00168">
    <property type="entry name" value="KCNECHANNEL"/>
</dbReference>
<evidence type="ECO:0000250" key="1">
    <source>
        <dbReference type="UniProtKB" id="Q9JJV7"/>
    </source>
</evidence>
<evidence type="ECO:0000255" key="2"/>
<evidence type="ECO:0000256" key="3">
    <source>
        <dbReference type="SAM" id="MobiDB-lite"/>
    </source>
</evidence>
<evidence type="ECO:0000269" key="4">
    <source>
    </source>
</evidence>
<evidence type="ECO:0000269" key="5">
    <source>
    </source>
</evidence>
<evidence type="ECO:0000269" key="6">
    <source>
    </source>
</evidence>
<evidence type="ECO:0000269" key="7">
    <source>
    </source>
</evidence>
<evidence type="ECO:0000269" key="8">
    <source>
    </source>
</evidence>
<evidence type="ECO:0000269" key="9">
    <source>
    </source>
</evidence>
<evidence type="ECO:0000269" key="10">
    <source>
    </source>
</evidence>
<evidence type="ECO:0000269" key="11">
    <source>
    </source>
</evidence>
<evidence type="ECO:0000269" key="12">
    <source>
    </source>
</evidence>
<evidence type="ECO:0000269" key="13">
    <source>
    </source>
</evidence>
<evidence type="ECO:0000269" key="14">
    <source>
    </source>
</evidence>
<evidence type="ECO:0000303" key="15">
    <source>
    </source>
</evidence>
<evidence type="ECO:0000303" key="16">
    <source>
    </source>
</evidence>
<evidence type="ECO:0000305" key="17"/>
<evidence type="ECO:0000312" key="18">
    <source>
        <dbReference type="HGNC" id="HGNC:6243"/>
    </source>
</evidence>
<evidence type="ECO:0007744" key="19">
    <source>
        <dbReference type="PDB" id="6V00"/>
    </source>
</evidence>
<evidence type="ECO:0007744" key="20">
    <source>
        <dbReference type="PDB" id="6V01"/>
    </source>
</evidence>
<evidence type="ECO:0007829" key="21">
    <source>
        <dbReference type="PDB" id="2NDJ"/>
    </source>
</evidence>
<evidence type="ECO:0007829" key="22">
    <source>
        <dbReference type="PDB" id="6V00"/>
    </source>
</evidence>
<organism>
    <name type="scientific">Homo sapiens</name>
    <name type="common">Human</name>
    <dbReference type="NCBI Taxonomy" id="9606"/>
    <lineage>
        <taxon>Eukaryota</taxon>
        <taxon>Metazoa</taxon>
        <taxon>Chordata</taxon>
        <taxon>Craniata</taxon>
        <taxon>Vertebrata</taxon>
        <taxon>Euteleostomi</taxon>
        <taxon>Mammalia</taxon>
        <taxon>Eutheria</taxon>
        <taxon>Euarchontoglires</taxon>
        <taxon>Primates</taxon>
        <taxon>Haplorrhini</taxon>
        <taxon>Catarrhini</taxon>
        <taxon>Hominidae</taxon>
        <taxon>Homo</taxon>
    </lineage>
</organism>
<protein>
    <recommendedName>
        <fullName>Potassium voltage-gated channel subfamily E member 3</fullName>
    </recommendedName>
    <alternativeName>
        <fullName evidence="16">MinK-related peptide 2</fullName>
        <shortName evidence="15">MiRP2</shortName>
    </alternativeName>
    <alternativeName>
        <fullName>Minimum potassium ion channel-related peptide 2</fullName>
    </alternativeName>
    <alternativeName>
        <fullName>Potassium channel subunit beta MiRP2</fullName>
    </alternativeName>
</protein>
<comment type="function">
    <text evidence="1 4 5 8">Ancillary protein that functions as a regulatory subunit of the voltage-gated potassium (Kv) channel complex composed of pore-forming and potassium-conducting alpha subunits and of regulatory beta subunits. KCNE3 beta subunit modulates the gating kinetics and enhances stability of the channel complex (PubMed:10646604, PubMed:11207363, PubMed:12954870). Alters the gating of the delayed rectifier Kv channel containing KCNB1 alpha subunit (PubMed:12954870). Associates with KCNC4/Kv3.4 alpha subunit to form the subthreshold Kv channel in skeletal muscle and to establish the resting membrane potential (RMP) in muscle cells (PubMed:11207363). Association with KCNQ1/KCLQT1 alpha subunit may form the intestinal cAMP-stimulated potassium channel involved in chloride secretion that produces a current with nearly instantaneous activation with a linear current-voltage relationship (By similarity).</text>
</comment>
<comment type="subunit">
    <text evidence="1 5 13 14">Interacts with KCNB1. Interacts with KCNC2 (By similarity). Associates with KCNC4/Kv3.4 (PubMed:11207363). Interacts with KCNQ1; associates with a KCNQ1:KCNE3 stoichiometry of 4:4; produces a current with nearly instantaneous activation with a linear current-voltage relationship and alters membrane raft localization; affects KCNQ1 structure and gating properties (By similarity) (PubMed:20533308, PubMed:31883792).</text>
</comment>
<comment type="subcellular location">
    <subcellularLocation>
        <location evidence="8">Cell membrane</location>
        <topology evidence="17">Single-pass type I membrane protein</topology>
    </subcellularLocation>
    <subcellularLocation>
        <location evidence="8">Cytoplasm</location>
    </subcellularLocation>
    <subcellularLocation>
        <location evidence="8">Perikaryon</location>
    </subcellularLocation>
    <subcellularLocation>
        <location evidence="8">Cell projection</location>
        <location evidence="8">Dendrite</location>
    </subcellularLocation>
    <subcellularLocation>
        <location evidence="13">Membrane raft</location>
    </subcellularLocation>
    <text evidence="8">Colocalizes with KCNB1 at high-density somatodendritic clusters on the surface of hippocampal neurons.</text>
</comment>
<comment type="tissue specificity">
    <text evidence="4 8">Expressed in hippocampal neurons (at protein level) (PubMed:12954870). Widely expressed with highest levels in kidney and moderate levels in small intestine.</text>
</comment>
<comment type="disease" evidence="11">
    <disease id="DI-02501">
        <name>Brugada syndrome 6</name>
        <acronym>BRGDA6</acronym>
        <description>A tachyarrhythmia characterized by right bundle branch block and ST segment elevation on an electrocardiogram (ECG). It can cause the ventricles to beat so fast that the blood is prevented from circulating efficiently in the body. When this situation occurs, the individual will faint and may die in a few minutes if the heart is not reset.</description>
        <dbReference type="MIM" id="613119"/>
    </disease>
    <text>The gene represented in this entry may be involved in disease pathogenesis.</text>
</comment>
<comment type="similarity">
    <text evidence="17">Belongs to the potassium channel KCNE family.</text>
</comment>
<reference key="1">
    <citation type="submission" date="1998-07" db="EMBL/GenBank/DDBJ databases">
        <authorList>
            <person name="Abbott G.W."/>
            <person name="Sesti F."/>
            <person name="Buck M.E."/>
            <person name="Goldstein S.A.N."/>
        </authorList>
    </citation>
    <scope>NUCLEOTIDE SEQUENCE [MRNA]</scope>
</reference>
<reference key="2">
    <citation type="journal article" date="2001" name="J. Biol. Chem.">
        <title>Structural determinants of KvLQT1 control by the KCNE family of proteins.</title>
        <authorList>
            <person name="Melman Y.F."/>
            <person name="Domenech A."/>
            <person name="de La Luna S."/>
            <person name="McDonald T.V."/>
        </authorList>
    </citation>
    <scope>NUCLEOTIDE SEQUENCE [MRNA]</scope>
</reference>
<reference key="3">
    <citation type="journal article" date="2004" name="Genome Res.">
        <title>The status, quality, and expansion of the NIH full-length cDNA project: the Mammalian Gene Collection (MGC).</title>
        <authorList>
            <consortium name="The MGC Project Team"/>
        </authorList>
    </citation>
    <scope>NUCLEOTIDE SEQUENCE [LARGE SCALE MRNA]</scope>
    <source>
        <tissue>Blood</tissue>
    </source>
</reference>
<reference key="4">
    <citation type="journal article" date="2000" name="Nature">
        <title>A constitutively open potassium channel formed by KCNQ1 and KCNE3.</title>
        <authorList>
            <person name="Schroeder B.C."/>
            <person name="Waldegger S."/>
            <person name="Fehr S."/>
            <person name="Bleich M."/>
            <person name="Warth R."/>
            <person name="Greger R."/>
            <person name="Jentsch T.J."/>
        </authorList>
    </citation>
    <scope>FUNCTION</scope>
    <scope>TISSUE SPECIFICITY</scope>
</reference>
<reference key="5">
    <citation type="journal article" date="2001" name="Cell">
        <title>MiRP2 forms potassium channels in skeletal muscle with Kv3.4 and is associated with periodic paralysis.</title>
        <authorList>
            <person name="Abbott G.W."/>
            <person name="Butler M.H."/>
            <person name="Bendahhou S."/>
            <person name="Dalakas M.C."/>
            <person name="Ptacek L.J."/>
            <person name="Goldstein S.A.N."/>
        </authorList>
    </citation>
    <scope>ASSOCIATION WITH KCNC4</scope>
    <scope>VARIANT HIS-83</scope>
</reference>
<reference key="6">
    <citation type="journal article" date="2002" name="FASEB J.">
        <title>Disease-associated mutations in KCNE potassium channel subunits (MiRPs) reveal promiscuous disruption of multiple currents and conservation of mechanism.</title>
        <authorList>
            <person name="Abbott G.W."/>
            <person name="Goldstein S.A.N."/>
        </authorList>
    </citation>
    <scope>MUTAGENESIS OF ASP-90</scope>
</reference>
<reference key="7">
    <citation type="journal article" date="2003" name="J. Neurosci.">
        <title>MinK-related peptide 2 modulates Kv2.1 and Kv3.1 potassium channels in mammalian brain.</title>
        <authorList>
            <person name="McCrossan Z.A."/>
            <person name="Lewis A."/>
            <person name="Panaghie G."/>
            <person name="Jordan P.N."/>
            <person name="Christini D.J."/>
            <person name="Lerner D.J."/>
            <person name="Abbott G.W."/>
        </authorList>
    </citation>
    <scope>FUNCTION</scope>
    <scope>SUBCELLULAR LOCATION</scope>
    <scope>TISSUE SPECIFICITY</scope>
</reference>
<reference key="8">
    <citation type="journal article" date="2010" name="J. Cell. Physiol.">
        <title>Impact of KCNE subunits on KCNQ1 (Kv7.1) channel membrane surface targeting.</title>
        <authorList>
            <person name="Roura-Ferrer M."/>
            <person name="Sole L."/>
            <person name="Oliveras A."/>
            <person name="Dahan R."/>
            <person name="Bielanska J."/>
            <person name="Villarroel A."/>
            <person name="Comes N."/>
            <person name="Felipe A."/>
        </authorList>
    </citation>
    <scope>SUBCELLULAR LOCATION</scope>
    <scope>INTERACTION WITH KCNQ1</scope>
</reference>
<reference evidence="19 20" key="9">
    <citation type="journal article" date="2020" name="Cell">
        <title>Structural Basis of Human KCNQ1 Modulation and Gating.</title>
        <authorList>
            <person name="Sun J."/>
            <person name="MacKinnon R."/>
        </authorList>
    </citation>
    <scope>STRUCTURE BY ELECTRON MICROSCOPY (3.10 ANGSTROMS)</scope>
    <scope>INTERACTION WITH KCNQ1</scope>
</reference>
<reference key="10">
    <citation type="journal article" date="2002" name="J. Clin. Endocrinol. Metab.">
        <title>A mutation in the KCNE3 potassium channel gene is associated with susceptibility to thyrotoxic hypokalemic periodic paralysis.</title>
        <authorList>
            <person name="Dias Da Silva M.R."/>
            <person name="Cerutti J.M."/>
            <person name="Arnaldi L.A.T."/>
            <person name="Maciel R.M.B."/>
        </authorList>
    </citation>
    <scope>VARIANT HIS-83</scope>
</reference>
<reference key="11">
    <citation type="journal article" date="2003" name="Neurology">
        <title>Lack of association of the potassium channel-associated peptide MiRP2-R83H variant with periodic paralysis.</title>
        <authorList>
            <person name="Sternberg D."/>
            <person name="Tabti N."/>
            <person name="Fournier E."/>
            <person name="Hainque B."/>
            <person name="Fontaine B."/>
        </authorList>
    </citation>
    <scope>LACK OF ASSOCIATION OF VARIANT HIS-83 WITH PERIODIC PARALISIS</scope>
</reference>
<reference key="12">
    <citation type="journal article" date="2004" name="Neurology">
        <title>Periodic paralysis mutation MiRP2-R83H in controls: Interpretations and general recommendation.</title>
        <authorList>
            <person name="Jurkat-Rott K."/>
            <person name="Lehmann-Horn F."/>
        </authorList>
    </citation>
    <scope>LACK OF ASSOCIATION OF VARIANT HIS-83 WITH PERIODIC PARALISIS</scope>
</reference>
<reference key="13">
    <citation type="journal article" date="2008" name="Circ. Arrhythm. Electrophysiol.">
        <title>Functional effects of KCNE3 mutation and its role in the development of Brugada syndrome.</title>
        <authorList>
            <person name="Delpon E."/>
            <person name="Cordeiro J.M."/>
            <person name="Nunez L."/>
            <person name="Thomsen P.E."/>
            <person name="Guerchicoff A."/>
            <person name="Pollevick G.D."/>
            <person name="Wu Y."/>
            <person name="Kanters J.K."/>
            <person name="Larsen C.T."/>
            <person name="Hofman-Bang J."/>
            <person name="Burashnikov E."/>
            <person name="Christiansen M."/>
            <person name="Antzelevitch C."/>
        </authorList>
    </citation>
    <scope>VARIANT BRGDA6 HIS-99</scope>
</reference>
<reference key="14">
    <citation type="journal article" date="2009" name="Hum. Mutat.">
        <title>Novel KCNE3 mutation reduces repolarizing potassium current and associated with long QT syndrome.</title>
        <authorList>
            <person name="Ohno S."/>
            <person name="Toyoda F."/>
            <person name="Zankov D.P."/>
            <person name="Yoshida H."/>
            <person name="Makiyama T."/>
            <person name="Tsuji K."/>
            <person name="Honda T."/>
            <person name="Obayashi K."/>
            <person name="Ueyama H."/>
            <person name="Shimizu W."/>
            <person name="Miyamoto Y."/>
            <person name="Kamakura S."/>
            <person name="Matsuura H."/>
            <person name="Kita T."/>
            <person name="Horie M."/>
        </authorList>
    </citation>
    <scope>VARIANTS ALA-4; ARG-39 AND HIS-99</scope>
</reference>
<gene>
    <name evidence="18" type="primary">KCNE3</name>
</gene>